<keyword id="KW-0002">3D-structure</keyword>
<keyword id="KW-0903">Direct protein sequencing</keyword>
<keyword id="KW-0249">Electron transport</keyword>
<keyword id="KW-0349">Heme</keyword>
<keyword id="KW-0408">Iron</keyword>
<keyword id="KW-0479">Metal-binding</keyword>
<keyword id="KW-0574">Periplasm</keyword>
<keyword id="KW-0602">Photosynthesis</keyword>
<keyword id="KW-1185">Reference proteome</keyword>
<keyword id="KW-0732">Signal</keyword>
<keyword id="KW-0813">Transport</keyword>
<reference key="1">
    <citation type="journal article" date="1991" name="Biochemistry">
        <title>The primary structure of cytochrome c-554 from the green photosynthetic bacterium Chloroflexus aurantiacus.</title>
        <authorList>
            <person name="Dracheva S."/>
            <person name="Williams J.C."/>
            <person name="van Driessche G."/>
            <person name="van Beeumen J.J."/>
            <person name="Blankenship R.E."/>
        </authorList>
    </citation>
    <scope>NUCLEOTIDE SEQUENCE [GENOMIC DNA]</scope>
    <scope>PROTEIN SEQUENCE OF 308-331 AND 370-400</scope>
</reference>
<reference key="2">
    <citation type="journal article" date="2011" name="BMC Genomics">
        <title>Complete genome sequence of the filamentous anoxygenic phototrophic bacterium Chloroflexus aurantiacus.</title>
        <authorList>
            <person name="Tang K.H."/>
            <person name="Barry K."/>
            <person name="Chertkov O."/>
            <person name="Dalin E."/>
            <person name="Han C.S."/>
            <person name="Hauser L.J."/>
            <person name="Honchak B.M."/>
            <person name="Karbach L.E."/>
            <person name="Land M.L."/>
            <person name="Lapidus A."/>
            <person name="Larimer F.W."/>
            <person name="Mikhailova N."/>
            <person name="Pitluck S."/>
            <person name="Pierson B.K."/>
            <person name="Blankenship R.E."/>
        </authorList>
    </citation>
    <scope>NUCLEOTIDE SEQUENCE [LARGE SCALE GENOMIC DNA]</scope>
    <source>
        <strain>ATCC 29366 / DSM 635 / J-10-fl</strain>
    </source>
</reference>
<reference key="3">
    <citation type="journal article" date="1995" name="Arch. Microbiol.">
        <title>Cloning and sequencing of the genes encoding the light-harvesting B806-866 polypeptides and initial studies on the transcriptional organization of puf2B, puf2A and puf2C in Chloroflexus aurantiacus.</title>
        <authorList>
            <person name="Watanabe Y."/>
            <person name="Feick R.G."/>
            <person name="Shiozawa J.A."/>
        </authorList>
    </citation>
    <scope>NUCLEOTIDE SEQUENCE [GENOMIC DNA] OF 1-50</scope>
</reference>
<evidence type="ECO:0000250" key="1"/>
<evidence type="ECO:0000255" key="2"/>
<evidence type="ECO:0000269" key="3">
    <source>
    </source>
</evidence>
<evidence type="ECO:0000305" key="4"/>
<comment type="function">
    <text>Serves as the immediate electron donor to the oxidized BChl2 (bacteriochlorophyll dimer) that is oxidized in the first step of light-induced charge separation. Can also oxidize low-potential substrates.</text>
</comment>
<comment type="subcellular location">
    <subcellularLocation>
        <location>Periplasm</location>
    </subcellularLocation>
</comment>
<comment type="PTM">
    <text>Binds 4 heme groups per subunit.</text>
</comment>
<comment type="PTM">
    <text evidence="4">The N-terminus is blocked.</text>
</comment>
<feature type="signal peptide" evidence="2">
    <location>
        <begin position="1"/>
        <end position="24"/>
    </location>
</feature>
<feature type="chain" id="PRO_0000006542" description="Cytochrome c-554">
    <location>
        <begin position="25"/>
        <end position="414"/>
    </location>
</feature>
<feature type="binding site" description="axial binding residue" evidence="1">
    <location>
        <position position="110"/>
    </location>
    <ligand>
        <name>heme</name>
        <dbReference type="ChEBI" id="CHEBI:30413"/>
        <label>1</label>
    </ligand>
    <ligandPart>
        <name>Fe</name>
        <dbReference type="ChEBI" id="CHEBI:18248"/>
    </ligandPart>
</feature>
<feature type="binding site" description="covalent" evidence="1">
    <location>
        <position position="131"/>
    </location>
    <ligand>
        <name>heme</name>
        <dbReference type="ChEBI" id="CHEBI:30413"/>
        <label>1</label>
    </ligand>
</feature>
<feature type="binding site" description="covalent" evidence="1">
    <location>
        <position position="134"/>
    </location>
    <ligand>
        <name>heme</name>
        <dbReference type="ChEBI" id="CHEBI:30413"/>
        <label>1</label>
    </ligand>
</feature>
<feature type="binding site" description="axial binding residue" evidence="1">
    <location>
        <position position="135"/>
    </location>
    <ligand>
        <name>heme</name>
        <dbReference type="ChEBI" id="CHEBI:30413"/>
        <label>1</label>
    </ligand>
    <ligandPart>
        <name>Fe</name>
        <dbReference type="ChEBI" id="CHEBI:18248"/>
    </ligandPart>
</feature>
<feature type="binding site" description="axial binding residue" evidence="1">
    <location>
        <position position="154"/>
    </location>
    <ligand>
        <name>heme</name>
        <dbReference type="ChEBI" id="CHEBI:30413"/>
        <label>2</label>
    </ligand>
    <ligandPart>
        <name>Fe</name>
        <dbReference type="ChEBI" id="CHEBI:18248"/>
    </ligandPart>
</feature>
<feature type="binding site" description="covalent" evidence="1">
    <location>
        <position position="179"/>
    </location>
    <ligand>
        <name>heme</name>
        <dbReference type="ChEBI" id="CHEBI:30413"/>
        <label>2</label>
    </ligand>
</feature>
<feature type="binding site" description="covalent" evidence="1">
    <location>
        <position position="182"/>
    </location>
    <ligand>
        <name>heme</name>
        <dbReference type="ChEBI" id="CHEBI:30413"/>
        <label>2</label>
    </ligand>
</feature>
<feature type="binding site" description="axial binding residue" evidence="1">
    <location>
        <position position="183"/>
    </location>
    <ligand>
        <name>heme</name>
        <dbReference type="ChEBI" id="CHEBI:30413"/>
        <label>2</label>
    </ligand>
    <ligandPart>
        <name>Fe</name>
        <dbReference type="ChEBI" id="CHEBI:18248"/>
    </ligandPart>
</feature>
<feature type="binding site" description="axial binding residue" evidence="1">
    <location>
        <position position="283"/>
    </location>
    <ligand>
        <name>heme</name>
        <dbReference type="ChEBI" id="CHEBI:30413"/>
        <label>3</label>
    </ligand>
    <ligandPart>
        <name>Fe</name>
        <dbReference type="ChEBI" id="CHEBI:18248"/>
    </ligandPart>
</feature>
<feature type="binding site" description="covalent" evidence="1">
    <location>
        <position position="294"/>
    </location>
    <ligand>
        <name>heme</name>
        <dbReference type="ChEBI" id="CHEBI:30413"/>
        <label>3</label>
    </ligand>
</feature>
<feature type="binding site" description="covalent" evidence="1">
    <location>
        <position position="297"/>
    </location>
    <ligand>
        <name>heme</name>
        <dbReference type="ChEBI" id="CHEBI:30413"/>
        <label>3</label>
    </ligand>
</feature>
<feature type="binding site" description="axial binding residue" evidence="1">
    <location>
        <position position="298"/>
    </location>
    <ligand>
        <name>heme</name>
        <dbReference type="ChEBI" id="CHEBI:30413"/>
        <label>3</label>
    </ligand>
    <ligandPart>
        <name>Fe</name>
        <dbReference type="ChEBI" id="CHEBI:18248"/>
    </ligandPart>
</feature>
<feature type="binding site" description="covalent" evidence="3">
    <location>
        <position position="378"/>
    </location>
    <ligand>
        <name>heme</name>
        <dbReference type="ChEBI" id="CHEBI:30413"/>
        <label>4</label>
    </ligand>
</feature>
<feature type="binding site" description="covalent" evidence="3">
    <location>
        <position position="381"/>
    </location>
    <ligand>
        <name>heme</name>
        <dbReference type="ChEBI" id="CHEBI:30413"/>
        <label>4</label>
    </ligand>
</feature>
<feature type="binding site" description="axial binding residue" evidence="1">
    <location>
        <position position="382"/>
    </location>
    <ligand>
        <name>heme</name>
        <dbReference type="ChEBI" id="CHEBI:30413"/>
        <label>4</label>
    </ligand>
    <ligandPart>
        <name>Fe</name>
        <dbReference type="ChEBI" id="CHEBI:18248"/>
    </ligandPart>
</feature>
<dbReference type="EMBL" id="M77813">
    <property type="protein sequence ID" value="AAA23100.1"/>
    <property type="molecule type" value="Genomic_DNA"/>
</dbReference>
<dbReference type="EMBL" id="CP000909">
    <property type="protein sequence ID" value="ABY35301.1"/>
    <property type="molecule type" value="Genomic_DNA"/>
</dbReference>
<dbReference type="EMBL" id="X73899">
    <property type="protein sequence ID" value="CAA52106.1"/>
    <property type="molecule type" value="Genomic_DNA"/>
</dbReference>
<dbReference type="PIR" id="A39303">
    <property type="entry name" value="A39303"/>
</dbReference>
<dbReference type="RefSeq" id="WP_012257955.1">
    <property type="nucleotide sequence ID" value="NC_010175.1"/>
</dbReference>
<dbReference type="RefSeq" id="YP_001635690.1">
    <property type="nucleotide sequence ID" value="NC_010175.1"/>
</dbReference>
<dbReference type="PDB" id="8YDM">
    <property type="method" value="EM"/>
    <property type="resolution" value="3.05 A"/>
    <property type="chains" value="C=1-414"/>
</dbReference>
<dbReference type="PDBsum" id="8YDM"/>
<dbReference type="EMDB" id="EMD-39177"/>
<dbReference type="STRING" id="324602.Caur_2089"/>
<dbReference type="EnsemblBacteria" id="ABY35301">
    <property type="protein sequence ID" value="ABY35301"/>
    <property type="gene ID" value="Caur_2089"/>
</dbReference>
<dbReference type="KEGG" id="cau:Caur_2089"/>
<dbReference type="PATRIC" id="fig|324602.8.peg.2369"/>
<dbReference type="eggNOG" id="ENOG502Z7SF">
    <property type="taxonomic scope" value="Bacteria"/>
</dbReference>
<dbReference type="HOGENOM" id="CLU_675859_0_0_0"/>
<dbReference type="InParanoid" id="P33325"/>
<dbReference type="Proteomes" id="UP000002008">
    <property type="component" value="Chromosome"/>
</dbReference>
<dbReference type="GO" id="GO:0042597">
    <property type="term" value="C:periplasmic space"/>
    <property type="evidence" value="ECO:0007669"/>
    <property type="project" value="UniProtKB-SubCell"/>
</dbReference>
<dbReference type="GO" id="GO:0030077">
    <property type="term" value="C:plasma membrane light-harvesting complex"/>
    <property type="evidence" value="ECO:0007669"/>
    <property type="project" value="InterPro"/>
</dbReference>
<dbReference type="GO" id="GO:0009055">
    <property type="term" value="F:electron transfer activity"/>
    <property type="evidence" value="ECO:0007669"/>
    <property type="project" value="InterPro"/>
</dbReference>
<dbReference type="GO" id="GO:0020037">
    <property type="term" value="F:heme binding"/>
    <property type="evidence" value="ECO:0007669"/>
    <property type="project" value="InterPro"/>
</dbReference>
<dbReference type="GO" id="GO:0005506">
    <property type="term" value="F:iron ion binding"/>
    <property type="evidence" value="ECO:0007669"/>
    <property type="project" value="InterPro"/>
</dbReference>
<dbReference type="GO" id="GO:0019684">
    <property type="term" value="P:photosynthesis, light reaction"/>
    <property type="evidence" value="ECO:0007669"/>
    <property type="project" value="InterPro"/>
</dbReference>
<dbReference type="CDD" id="cd09224">
    <property type="entry name" value="CytoC_RC"/>
    <property type="match status" value="1"/>
</dbReference>
<dbReference type="Gene3D" id="1.10.468.10">
    <property type="entry name" value="Photosynthetic Reaction Center, subunit C, domain 2"/>
    <property type="match status" value="2"/>
</dbReference>
<dbReference type="InterPro" id="IPR054997">
    <property type="entry name" value="Cyt554Puf2C"/>
</dbReference>
<dbReference type="InterPro" id="IPR023119">
    <property type="entry name" value="Multihaem_cyt_PRC_cyt_su-like"/>
</dbReference>
<dbReference type="InterPro" id="IPR036280">
    <property type="entry name" value="Multihaem_cyt_sf"/>
</dbReference>
<dbReference type="InterPro" id="IPR003158">
    <property type="entry name" value="Photosyn_RC_cyt_c-su"/>
</dbReference>
<dbReference type="NCBIfam" id="NF043009">
    <property type="entry name" value="Cyt554Puf2C_Caul"/>
    <property type="match status" value="1"/>
</dbReference>
<dbReference type="Pfam" id="PF02276">
    <property type="entry name" value="CytoC_RC"/>
    <property type="match status" value="2"/>
</dbReference>
<dbReference type="SUPFAM" id="SSF48695">
    <property type="entry name" value="Multiheme cytochromes"/>
    <property type="match status" value="1"/>
</dbReference>
<dbReference type="PROSITE" id="PS51008">
    <property type="entry name" value="MULTIHEME_CYTC"/>
    <property type="match status" value="3"/>
</dbReference>
<organism>
    <name type="scientific">Chloroflexus aurantiacus (strain ATCC 29366 / DSM 635 / J-10-fl)</name>
    <dbReference type="NCBI Taxonomy" id="324602"/>
    <lineage>
        <taxon>Bacteria</taxon>
        <taxon>Bacillati</taxon>
        <taxon>Chloroflexota</taxon>
        <taxon>Chloroflexia</taxon>
        <taxon>Chloroflexales</taxon>
        <taxon>Chloroflexineae</taxon>
        <taxon>Chloroflexaceae</taxon>
        <taxon>Chloroflexus</taxon>
    </lineage>
</organism>
<accession>P33325</accession>
<accession>A9WEY6</accession>
<sequence length="414" mass="45594">MQSSRPSDRQLAIVVSVAVGIVVAVITTATFWWVYDLTLGRAQREAAQTAGARWSPSDGIKVITSSPPVTPTDGRQNWMGTQAWNEGVQAGQAWIQQYPNTVNVQVLIGMSSAQIWTYMQQYVSGALGVGCQYCHNINNFASDEYPQKIAARNMLRLVRDVNAEFIVNLPNWQGNYVQCATCHNNAPNNLEGFGAQFINSVPPIKVTVDPLDANGMAILDPAQKPEAIREPVLLKDAILFYIYNYQVWKPFDPNDPESGRGSLALTYDGGRTQDQVTINQNVMNYQAWSLGVGCTFCHNSRNFVAYELNPAGDNVLNPLYAYNKLKAQRMLLLTTWLAENWPRYGAIAKPEIPTGSGAASRYSYQRLGDGQIYNVPGCYTCHQGNNIPLASINQANIPSGDAGIVVLPPQIRGR</sequence>
<name>C554_CHLAA</name>
<proteinExistence type="evidence at protein level"/>
<gene>
    <name type="primary">puf2C</name>
    <name type="ordered locus">Caur_2089</name>
</gene>
<protein>
    <recommendedName>
        <fullName>Cytochrome c-554</fullName>
    </recommendedName>
    <alternativeName>
        <fullName>Cytochrome c554</fullName>
    </alternativeName>
</protein>